<organism>
    <name type="scientific">Kineococcus radiotolerans (strain ATCC BAA-149 / DSM 14245 / SRS30216)</name>
    <dbReference type="NCBI Taxonomy" id="266940"/>
    <lineage>
        <taxon>Bacteria</taxon>
        <taxon>Bacillati</taxon>
        <taxon>Actinomycetota</taxon>
        <taxon>Actinomycetes</taxon>
        <taxon>Kineosporiales</taxon>
        <taxon>Kineosporiaceae</taxon>
        <taxon>Kineococcus</taxon>
    </lineage>
</organism>
<keyword id="KW-0227">DNA damage</keyword>
<keyword id="KW-0234">DNA repair</keyword>
<keyword id="KW-0238">DNA-binding</keyword>
<keyword id="KW-0326">Glycosidase</keyword>
<keyword id="KW-0378">Hydrolase</keyword>
<keyword id="KW-0456">Lyase</keyword>
<keyword id="KW-0479">Metal-binding</keyword>
<keyword id="KW-0511">Multifunctional enzyme</keyword>
<keyword id="KW-1185">Reference proteome</keyword>
<keyword id="KW-0862">Zinc</keyword>
<keyword id="KW-0863">Zinc-finger</keyword>
<protein>
    <recommendedName>
        <fullName evidence="2">Formamidopyrimidine-DNA glycosylase</fullName>
        <shortName evidence="2">Fapy-DNA glycosylase</shortName>
        <ecNumber evidence="2">3.2.2.23</ecNumber>
    </recommendedName>
    <alternativeName>
        <fullName evidence="2">DNA-(apurinic or apyrimidinic site) lyase MutM</fullName>
        <shortName evidence="2">AP lyase MutM</shortName>
        <ecNumber evidence="2">4.2.99.18</ecNumber>
    </alternativeName>
</protein>
<accession>A6W7S6</accession>
<reference key="1">
    <citation type="journal article" date="2008" name="PLoS ONE">
        <title>Survival in nuclear waste, extreme resistance, and potential applications gleaned from the genome sequence of Kineococcus radiotolerans SRS30216.</title>
        <authorList>
            <person name="Bagwell C.E."/>
            <person name="Bhat S."/>
            <person name="Hawkins G.M."/>
            <person name="Smith B.W."/>
            <person name="Biswas T."/>
            <person name="Hoover T.R."/>
            <person name="Saunders E."/>
            <person name="Han C.S."/>
            <person name="Tsodikov O.V."/>
            <person name="Shimkets L.J."/>
        </authorList>
    </citation>
    <scope>NUCLEOTIDE SEQUENCE [LARGE SCALE GENOMIC DNA]</scope>
    <source>
        <strain>ATCC BAA-149 / DSM 14245 / SRS30216</strain>
    </source>
</reference>
<name>FPG_KINRD</name>
<dbReference type="EC" id="3.2.2.23" evidence="2"/>
<dbReference type="EC" id="4.2.99.18" evidence="2"/>
<dbReference type="EMBL" id="CP000750">
    <property type="protein sequence ID" value="ABS02865.1"/>
    <property type="molecule type" value="Genomic_DNA"/>
</dbReference>
<dbReference type="RefSeq" id="WP_012084272.1">
    <property type="nucleotide sequence ID" value="NC_009664.2"/>
</dbReference>
<dbReference type="SMR" id="A6W7S6"/>
<dbReference type="STRING" id="266940.Krad_1377"/>
<dbReference type="KEGG" id="kra:Krad_1377"/>
<dbReference type="eggNOG" id="COG0266">
    <property type="taxonomic scope" value="Bacteria"/>
</dbReference>
<dbReference type="HOGENOM" id="CLU_038423_1_2_11"/>
<dbReference type="OrthoDB" id="9800855at2"/>
<dbReference type="Proteomes" id="UP000001116">
    <property type="component" value="Chromosome"/>
</dbReference>
<dbReference type="GO" id="GO:0034039">
    <property type="term" value="F:8-oxo-7,8-dihydroguanine DNA N-glycosylase activity"/>
    <property type="evidence" value="ECO:0007669"/>
    <property type="project" value="TreeGrafter"/>
</dbReference>
<dbReference type="GO" id="GO:0140078">
    <property type="term" value="F:class I DNA-(apurinic or apyrimidinic site) endonuclease activity"/>
    <property type="evidence" value="ECO:0007669"/>
    <property type="project" value="UniProtKB-EC"/>
</dbReference>
<dbReference type="GO" id="GO:0003684">
    <property type="term" value="F:damaged DNA binding"/>
    <property type="evidence" value="ECO:0007669"/>
    <property type="project" value="InterPro"/>
</dbReference>
<dbReference type="GO" id="GO:0008270">
    <property type="term" value="F:zinc ion binding"/>
    <property type="evidence" value="ECO:0007669"/>
    <property type="project" value="UniProtKB-UniRule"/>
</dbReference>
<dbReference type="GO" id="GO:0006284">
    <property type="term" value="P:base-excision repair"/>
    <property type="evidence" value="ECO:0007669"/>
    <property type="project" value="InterPro"/>
</dbReference>
<dbReference type="CDD" id="cd08966">
    <property type="entry name" value="EcFpg-like_N"/>
    <property type="match status" value="1"/>
</dbReference>
<dbReference type="FunFam" id="1.10.8.50:FF:000003">
    <property type="entry name" value="Formamidopyrimidine-DNA glycosylase"/>
    <property type="match status" value="1"/>
</dbReference>
<dbReference type="Gene3D" id="1.10.8.50">
    <property type="match status" value="1"/>
</dbReference>
<dbReference type="Gene3D" id="3.20.190.10">
    <property type="entry name" value="MutM-like, N-terminal"/>
    <property type="match status" value="1"/>
</dbReference>
<dbReference type="HAMAP" id="MF_00103">
    <property type="entry name" value="Fapy_DNA_glycosyl"/>
    <property type="match status" value="1"/>
</dbReference>
<dbReference type="InterPro" id="IPR015886">
    <property type="entry name" value="DNA_glyclase/AP_lyase_DNA-bd"/>
</dbReference>
<dbReference type="InterPro" id="IPR020629">
    <property type="entry name" value="Formamido-pyr_DNA_Glyclase"/>
</dbReference>
<dbReference type="InterPro" id="IPR012319">
    <property type="entry name" value="FPG_cat"/>
</dbReference>
<dbReference type="InterPro" id="IPR035937">
    <property type="entry name" value="MutM-like_N-ter"/>
</dbReference>
<dbReference type="InterPro" id="IPR010979">
    <property type="entry name" value="Ribosomal_uS13-like_H2TH"/>
</dbReference>
<dbReference type="InterPro" id="IPR000214">
    <property type="entry name" value="Znf_DNA_glyclase/AP_lyase"/>
</dbReference>
<dbReference type="InterPro" id="IPR010663">
    <property type="entry name" value="Znf_FPG/IleRS"/>
</dbReference>
<dbReference type="NCBIfam" id="TIGR00577">
    <property type="entry name" value="fpg"/>
    <property type="match status" value="1"/>
</dbReference>
<dbReference type="NCBIfam" id="NF002211">
    <property type="entry name" value="PRK01103.1"/>
    <property type="match status" value="1"/>
</dbReference>
<dbReference type="PANTHER" id="PTHR22993">
    <property type="entry name" value="FORMAMIDOPYRIMIDINE-DNA GLYCOSYLASE"/>
    <property type="match status" value="1"/>
</dbReference>
<dbReference type="PANTHER" id="PTHR22993:SF9">
    <property type="entry name" value="FORMAMIDOPYRIMIDINE-DNA GLYCOSYLASE"/>
    <property type="match status" value="1"/>
</dbReference>
<dbReference type="Pfam" id="PF01149">
    <property type="entry name" value="Fapy_DNA_glyco"/>
    <property type="match status" value="1"/>
</dbReference>
<dbReference type="Pfam" id="PF06831">
    <property type="entry name" value="H2TH"/>
    <property type="match status" value="1"/>
</dbReference>
<dbReference type="Pfam" id="PF06827">
    <property type="entry name" value="zf-FPG_IleRS"/>
    <property type="match status" value="1"/>
</dbReference>
<dbReference type="SMART" id="SM00898">
    <property type="entry name" value="Fapy_DNA_glyco"/>
    <property type="match status" value="1"/>
</dbReference>
<dbReference type="SMART" id="SM01232">
    <property type="entry name" value="H2TH"/>
    <property type="match status" value="1"/>
</dbReference>
<dbReference type="SUPFAM" id="SSF57716">
    <property type="entry name" value="Glucocorticoid receptor-like (DNA-binding domain)"/>
    <property type="match status" value="1"/>
</dbReference>
<dbReference type="SUPFAM" id="SSF81624">
    <property type="entry name" value="N-terminal domain of MutM-like DNA repair proteins"/>
    <property type="match status" value="1"/>
</dbReference>
<dbReference type="SUPFAM" id="SSF46946">
    <property type="entry name" value="S13-like H2TH domain"/>
    <property type="match status" value="1"/>
</dbReference>
<dbReference type="PROSITE" id="PS51068">
    <property type="entry name" value="FPG_CAT"/>
    <property type="match status" value="1"/>
</dbReference>
<dbReference type="PROSITE" id="PS51066">
    <property type="entry name" value="ZF_FPG_2"/>
    <property type="match status" value="1"/>
</dbReference>
<evidence type="ECO:0000250" key="1"/>
<evidence type="ECO:0000255" key="2">
    <source>
        <dbReference type="HAMAP-Rule" id="MF_00103"/>
    </source>
</evidence>
<feature type="initiator methionine" description="Removed" evidence="1">
    <location>
        <position position="1"/>
    </location>
</feature>
<feature type="chain" id="PRO_1000075701" description="Formamidopyrimidine-DNA glycosylase">
    <location>
        <begin position="2"/>
        <end position="308"/>
    </location>
</feature>
<feature type="zinc finger region" description="FPG-type" evidence="2">
    <location>
        <begin position="267"/>
        <end position="301"/>
    </location>
</feature>
<feature type="active site" description="Schiff-base intermediate with DNA" evidence="2">
    <location>
        <position position="2"/>
    </location>
</feature>
<feature type="active site" description="Proton donor" evidence="2">
    <location>
        <position position="3"/>
    </location>
</feature>
<feature type="active site" description="Proton donor; for beta-elimination activity" evidence="2">
    <location>
        <position position="61"/>
    </location>
</feature>
<feature type="active site" description="Proton donor; for delta-elimination activity" evidence="2">
    <location>
        <position position="291"/>
    </location>
</feature>
<feature type="binding site" evidence="2">
    <location>
        <position position="100"/>
    </location>
    <ligand>
        <name>DNA</name>
        <dbReference type="ChEBI" id="CHEBI:16991"/>
    </ligand>
</feature>
<feature type="binding site" evidence="2">
    <location>
        <position position="120"/>
    </location>
    <ligand>
        <name>DNA</name>
        <dbReference type="ChEBI" id="CHEBI:16991"/>
    </ligand>
</feature>
<feature type="binding site" evidence="2">
    <location>
        <position position="181"/>
    </location>
    <ligand>
        <name>DNA</name>
        <dbReference type="ChEBI" id="CHEBI:16991"/>
    </ligand>
</feature>
<gene>
    <name evidence="2" type="primary">mutM</name>
    <name evidence="2" type="synonym">fpg</name>
    <name type="ordered locus">Krad_1377</name>
</gene>
<comment type="function">
    <text evidence="2">Involved in base excision repair of DNA damaged by oxidation or by mutagenic agents. Acts as a DNA glycosylase that recognizes and removes damaged bases. Has a preference for oxidized purines, such as 7,8-dihydro-8-oxoguanine (8-oxoG). Has AP (apurinic/apyrimidinic) lyase activity and introduces nicks in the DNA strand. Cleaves the DNA backbone by beta-delta elimination to generate a single-strand break at the site of the removed base with both 3'- and 5'-phosphates.</text>
</comment>
<comment type="catalytic activity">
    <reaction evidence="2">
        <text>Hydrolysis of DNA containing ring-opened 7-methylguanine residues, releasing 2,6-diamino-4-hydroxy-5-(N-methyl)formamidopyrimidine.</text>
        <dbReference type="EC" id="3.2.2.23"/>
    </reaction>
</comment>
<comment type="catalytic activity">
    <reaction evidence="2">
        <text>2'-deoxyribonucleotide-(2'-deoxyribose 5'-phosphate)-2'-deoxyribonucleotide-DNA = a 3'-end 2'-deoxyribonucleotide-(2,3-dehydro-2,3-deoxyribose 5'-phosphate)-DNA + a 5'-end 5'-phospho-2'-deoxyribonucleoside-DNA + H(+)</text>
        <dbReference type="Rhea" id="RHEA:66592"/>
        <dbReference type="Rhea" id="RHEA-COMP:13180"/>
        <dbReference type="Rhea" id="RHEA-COMP:16897"/>
        <dbReference type="Rhea" id="RHEA-COMP:17067"/>
        <dbReference type="ChEBI" id="CHEBI:15378"/>
        <dbReference type="ChEBI" id="CHEBI:136412"/>
        <dbReference type="ChEBI" id="CHEBI:157695"/>
        <dbReference type="ChEBI" id="CHEBI:167181"/>
        <dbReference type="EC" id="4.2.99.18"/>
    </reaction>
</comment>
<comment type="cofactor">
    <cofactor evidence="2">
        <name>Zn(2+)</name>
        <dbReference type="ChEBI" id="CHEBI:29105"/>
    </cofactor>
    <text evidence="2">Binds 1 zinc ion per subunit.</text>
</comment>
<comment type="subunit">
    <text evidence="2">Monomer.</text>
</comment>
<comment type="similarity">
    <text evidence="2">Belongs to the FPG family.</text>
</comment>
<proteinExistence type="inferred from homology"/>
<sequence length="308" mass="33227">MPELPEVEVVRRGVARWVVGRTVSSARFLHPRVTRRHVAGPDDAGARTRGLVVADAVRRGKYLWLPLATPDGRAEEAMVVHLGMSGQLLVEAADAPEEKHLRAVWTFDDGGEDLRFVDQRTFGGIAVVPLVATPDGGPGGLGETPDGSWSGSMPAPVAHIARDPLDPAFDDAVFARRLRERTTGLKRALLDQTLVSGVGNIYADEALWRAKLHYARPTRSVTPAQAAALLAGLREVMTAALDAGGTSFDSLYVNVNGASGYFDRSLAVYGQEGRPCPRCGALVRRDAFMNRSSFSCPVCQPVPRSPHW</sequence>